<dbReference type="EMBL" id="AM747720">
    <property type="protein sequence ID" value="CAR50341.1"/>
    <property type="molecule type" value="Genomic_DNA"/>
</dbReference>
<dbReference type="RefSeq" id="WP_006482709.1">
    <property type="nucleotide sequence ID" value="NC_011000.1"/>
</dbReference>
<dbReference type="SMR" id="B4EEY8"/>
<dbReference type="GeneID" id="83046920"/>
<dbReference type="KEGG" id="bcj:BCAL0035"/>
<dbReference type="eggNOG" id="COG0224">
    <property type="taxonomic scope" value="Bacteria"/>
</dbReference>
<dbReference type="HOGENOM" id="CLU_050669_0_1_4"/>
<dbReference type="BioCyc" id="BCEN216591:G1G1V-38-MONOMER"/>
<dbReference type="Proteomes" id="UP000001035">
    <property type="component" value="Chromosome 1"/>
</dbReference>
<dbReference type="GO" id="GO:0005886">
    <property type="term" value="C:plasma membrane"/>
    <property type="evidence" value="ECO:0007669"/>
    <property type="project" value="UniProtKB-SubCell"/>
</dbReference>
<dbReference type="GO" id="GO:0045259">
    <property type="term" value="C:proton-transporting ATP synthase complex"/>
    <property type="evidence" value="ECO:0007669"/>
    <property type="project" value="UniProtKB-KW"/>
</dbReference>
<dbReference type="GO" id="GO:0005524">
    <property type="term" value="F:ATP binding"/>
    <property type="evidence" value="ECO:0007669"/>
    <property type="project" value="UniProtKB-UniRule"/>
</dbReference>
<dbReference type="GO" id="GO:0046933">
    <property type="term" value="F:proton-transporting ATP synthase activity, rotational mechanism"/>
    <property type="evidence" value="ECO:0007669"/>
    <property type="project" value="UniProtKB-UniRule"/>
</dbReference>
<dbReference type="GO" id="GO:0042777">
    <property type="term" value="P:proton motive force-driven plasma membrane ATP synthesis"/>
    <property type="evidence" value="ECO:0007669"/>
    <property type="project" value="UniProtKB-UniRule"/>
</dbReference>
<dbReference type="CDD" id="cd12151">
    <property type="entry name" value="F1-ATPase_gamma"/>
    <property type="match status" value="1"/>
</dbReference>
<dbReference type="FunFam" id="1.10.287.80:FF:000005">
    <property type="entry name" value="ATP synthase gamma chain"/>
    <property type="match status" value="1"/>
</dbReference>
<dbReference type="Gene3D" id="3.40.1380.10">
    <property type="match status" value="1"/>
</dbReference>
<dbReference type="Gene3D" id="1.10.287.80">
    <property type="entry name" value="ATP synthase, gamma subunit, helix hairpin domain"/>
    <property type="match status" value="1"/>
</dbReference>
<dbReference type="HAMAP" id="MF_00815">
    <property type="entry name" value="ATP_synth_gamma_bact"/>
    <property type="match status" value="1"/>
</dbReference>
<dbReference type="InterPro" id="IPR035968">
    <property type="entry name" value="ATP_synth_F1_ATPase_gsu"/>
</dbReference>
<dbReference type="InterPro" id="IPR000131">
    <property type="entry name" value="ATP_synth_F1_gsu"/>
</dbReference>
<dbReference type="InterPro" id="IPR023632">
    <property type="entry name" value="ATP_synth_F1_gsu_CS"/>
</dbReference>
<dbReference type="NCBIfam" id="TIGR01146">
    <property type="entry name" value="ATPsyn_F1gamma"/>
    <property type="match status" value="1"/>
</dbReference>
<dbReference type="NCBIfam" id="NF004144">
    <property type="entry name" value="PRK05621.1-1"/>
    <property type="match status" value="1"/>
</dbReference>
<dbReference type="PANTHER" id="PTHR11693">
    <property type="entry name" value="ATP SYNTHASE GAMMA CHAIN"/>
    <property type="match status" value="1"/>
</dbReference>
<dbReference type="PANTHER" id="PTHR11693:SF22">
    <property type="entry name" value="ATP SYNTHASE SUBUNIT GAMMA, MITOCHONDRIAL"/>
    <property type="match status" value="1"/>
</dbReference>
<dbReference type="Pfam" id="PF00231">
    <property type="entry name" value="ATP-synt"/>
    <property type="match status" value="1"/>
</dbReference>
<dbReference type="PRINTS" id="PR00126">
    <property type="entry name" value="ATPASEGAMMA"/>
</dbReference>
<dbReference type="SUPFAM" id="SSF52943">
    <property type="entry name" value="ATP synthase (F1-ATPase), gamma subunit"/>
    <property type="match status" value="1"/>
</dbReference>
<dbReference type="PROSITE" id="PS00153">
    <property type="entry name" value="ATPASE_GAMMA"/>
    <property type="match status" value="1"/>
</dbReference>
<gene>
    <name evidence="1" type="primary">atpG</name>
    <name type="ordered locus">BceJ2315_00350</name>
    <name type="ORF">BCAL0035</name>
</gene>
<reference key="1">
    <citation type="journal article" date="2009" name="J. Bacteriol.">
        <title>The genome of Burkholderia cenocepacia J2315, an epidemic pathogen of cystic fibrosis patients.</title>
        <authorList>
            <person name="Holden M.T."/>
            <person name="Seth-Smith H.M."/>
            <person name="Crossman L.C."/>
            <person name="Sebaihia M."/>
            <person name="Bentley S.D."/>
            <person name="Cerdeno-Tarraga A.M."/>
            <person name="Thomson N.R."/>
            <person name="Bason N."/>
            <person name="Quail M.A."/>
            <person name="Sharp S."/>
            <person name="Cherevach I."/>
            <person name="Churcher C."/>
            <person name="Goodhead I."/>
            <person name="Hauser H."/>
            <person name="Holroyd N."/>
            <person name="Mungall K."/>
            <person name="Scott P."/>
            <person name="Walker D."/>
            <person name="White B."/>
            <person name="Rose H."/>
            <person name="Iversen P."/>
            <person name="Mil-Homens D."/>
            <person name="Rocha E.P."/>
            <person name="Fialho A.M."/>
            <person name="Baldwin A."/>
            <person name="Dowson C."/>
            <person name="Barrell B.G."/>
            <person name="Govan J.R."/>
            <person name="Vandamme P."/>
            <person name="Hart C.A."/>
            <person name="Mahenthiralingam E."/>
            <person name="Parkhill J."/>
        </authorList>
    </citation>
    <scope>NUCLEOTIDE SEQUENCE [LARGE SCALE GENOMIC DNA]</scope>
    <source>
        <strain>ATCC BAA-245 / DSM 16553 / LMG 16656 / NCTC 13227 / J2315 / CF5610</strain>
    </source>
</reference>
<sequence length="291" mass="31799">MAGMKEIRGKIKSVQNTRKITKAMEMVAASKMRRAQERMRAARPYADKVRAIAAHMSRANPEYRHPFMVANDGAQTAGIILVTTDKGLCGGLNTNVLRATVQKFKELEEKGQKVEATAIGGKGLGFLNRFGAKVMSQVVHLGDTPHLDKLIGAVKTQLDLYSEGKLSAVYIAYTRFVNTMKQEAVIEQLLPLSSDHFEADDGTPATSWDYIYEPDAQAVVDELLVRYVEALVYQAVAENMASEQSARMVAMKAASDNAKTVISELQLVYNKSRQAAITKELSEIVGGAAAV</sequence>
<feature type="chain" id="PRO_1000134118" description="ATP synthase gamma chain">
    <location>
        <begin position="1"/>
        <end position="291"/>
    </location>
</feature>
<organism>
    <name type="scientific">Burkholderia cenocepacia (strain ATCC BAA-245 / DSM 16553 / LMG 16656 / NCTC 13227 / J2315 / CF5610)</name>
    <name type="common">Burkholderia cepacia (strain J2315)</name>
    <dbReference type="NCBI Taxonomy" id="216591"/>
    <lineage>
        <taxon>Bacteria</taxon>
        <taxon>Pseudomonadati</taxon>
        <taxon>Pseudomonadota</taxon>
        <taxon>Betaproteobacteria</taxon>
        <taxon>Burkholderiales</taxon>
        <taxon>Burkholderiaceae</taxon>
        <taxon>Burkholderia</taxon>
        <taxon>Burkholderia cepacia complex</taxon>
    </lineage>
</organism>
<accession>B4EEY8</accession>
<name>ATPG_BURCJ</name>
<evidence type="ECO:0000255" key="1">
    <source>
        <dbReference type="HAMAP-Rule" id="MF_00815"/>
    </source>
</evidence>
<keyword id="KW-0066">ATP synthesis</keyword>
<keyword id="KW-0997">Cell inner membrane</keyword>
<keyword id="KW-1003">Cell membrane</keyword>
<keyword id="KW-0139">CF(1)</keyword>
<keyword id="KW-0375">Hydrogen ion transport</keyword>
<keyword id="KW-0406">Ion transport</keyword>
<keyword id="KW-0472">Membrane</keyword>
<keyword id="KW-0813">Transport</keyword>
<protein>
    <recommendedName>
        <fullName evidence="1">ATP synthase gamma chain</fullName>
    </recommendedName>
    <alternativeName>
        <fullName evidence="1">ATP synthase F1 sector gamma subunit</fullName>
    </alternativeName>
    <alternativeName>
        <fullName evidence="1">F-ATPase gamma subunit</fullName>
    </alternativeName>
</protein>
<proteinExistence type="inferred from homology"/>
<comment type="function">
    <text evidence="1">Produces ATP from ADP in the presence of a proton gradient across the membrane. The gamma chain is believed to be important in regulating ATPase activity and the flow of protons through the CF(0) complex.</text>
</comment>
<comment type="subunit">
    <text evidence="1">F-type ATPases have 2 components, CF(1) - the catalytic core - and CF(0) - the membrane proton channel. CF(1) has five subunits: alpha(3), beta(3), gamma(1), delta(1), epsilon(1). CF(0) has three main subunits: a, b and c.</text>
</comment>
<comment type="subcellular location">
    <subcellularLocation>
        <location evidence="1">Cell inner membrane</location>
        <topology evidence="1">Peripheral membrane protein</topology>
    </subcellularLocation>
</comment>
<comment type="similarity">
    <text evidence="1">Belongs to the ATPase gamma chain family.</text>
</comment>